<reference key="1">
    <citation type="journal article" date="2006" name="Mol. Microbiol.">
        <title>Role of pathogenicity island-associated integrases in the genome plasticity of uropathogenic Escherichia coli strain 536.</title>
        <authorList>
            <person name="Hochhut B."/>
            <person name="Wilde C."/>
            <person name="Balling G."/>
            <person name="Middendorf B."/>
            <person name="Dobrindt U."/>
            <person name="Brzuszkiewicz E."/>
            <person name="Gottschalk G."/>
            <person name="Carniel E."/>
            <person name="Hacker J."/>
        </authorList>
    </citation>
    <scope>NUCLEOTIDE SEQUENCE [LARGE SCALE GENOMIC DNA]</scope>
    <source>
        <strain>536 / UPEC</strain>
    </source>
</reference>
<dbReference type="EMBL" id="CP000247">
    <property type="protein sequence ID" value="ABG68950.1"/>
    <property type="molecule type" value="Genomic_DNA"/>
</dbReference>
<dbReference type="RefSeq" id="WP_000572631.1">
    <property type="nucleotide sequence ID" value="NC_008253.1"/>
</dbReference>
<dbReference type="SMR" id="Q0TJC9"/>
<dbReference type="KEGG" id="ecp:ECP_0935"/>
<dbReference type="HOGENOM" id="CLU_004430_0_0_6"/>
<dbReference type="Proteomes" id="UP000009182">
    <property type="component" value="Chromosome"/>
</dbReference>
<dbReference type="GO" id="GO:0005737">
    <property type="term" value="C:cytoplasm"/>
    <property type="evidence" value="ECO:0007669"/>
    <property type="project" value="UniProtKB-UniRule"/>
</dbReference>
<dbReference type="GO" id="GO:0009295">
    <property type="term" value="C:nucleoid"/>
    <property type="evidence" value="ECO:0007669"/>
    <property type="project" value="UniProtKB-SubCell"/>
</dbReference>
<dbReference type="GO" id="GO:0005524">
    <property type="term" value="F:ATP binding"/>
    <property type="evidence" value="ECO:0007669"/>
    <property type="project" value="UniProtKB-UniRule"/>
</dbReference>
<dbReference type="GO" id="GO:0003677">
    <property type="term" value="F:DNA binding"/>
    <property type="evidence" value="ECO:0007669"/>
    <property type="project" value="UniProtKB-UniRule"/>
</dbReference>
<dbReference type="GO" id="GO:0051301">
    <property type="term" value="P:cell division"/>
    <property type="evidence" value="ECO:0007669"/>
    <property type="project" value="UniProtKB-KW"/>
</dbReference>
<dbReference type="GO" id="GO:0030261">
    <property type="term" value="P:chromosome condensation"/>
    <property type="evidence" value="ECO:0007669"/>
    <property type="project" value="UniProtKB-KW"/>
</dbReference>
<dbReference type="GO" id="GO:0007059">
    <property type="term" value="P:chromosome segregation"/>
    <property type="evidence" value="ECO:0007669"/>
    <property type="project" value="UniProtKB-UniRule"/>
</dbReference>
<dbReference type="GO" id="GO:0006260">
    <property type="term" value="P:DNA replication"/>
    <property type="evidence" value="ECO:0007669"/>
    <property type="project" value="UniProtKB-UniRule"/>
</dbReference>
<dbReference type="FunFam" id="1.20.58.850:FF:000001">
    <property type="entry name" value="Chromosome partition protein MukB"/>
    <property type="match status" value="1"/>
</dbReference>
<dbReference type="FunFam" id="3.30.70.3500:FF:000001">
    <property type="entry name" value="Chromosome partition protein MukB"/>
    <property type="match status" value="1"/>
</dbReference>
<dbReference type="FunFam" id="3.40.1140.10:FF:000001">
    <property type="entry name" value="Chromosome partition protein MukB"/>
    <property type="match status" value="1"/>
</dbReference>
<dbReference type="FunFam" id="3.40.1140.10:FF:000002">
    <property type="entry name" value="Chromosome partition protein MukB"/>
    <property type="match status" value="1"/>
</dbReference>
<dbReference type="Gene3D" id="1.10.287.1490">
    <property type="match status" value="1"/>
</dbReference>
<dbReference type="Gene3D" id="1.20.58.850">
    <property type="match status" value="1"/>
</dbReference>
<dbReference type="Gene3D" id="3.40.1140.10">
    <property type="match status" value="2"/>
</dbReference>
<dbReference type="Gene3D" id="1.20.5.420">
    <property type="entry name" value="Immunoglobulin FC, subunit C"/>
    <property type="match status" value="1"/>
</dbReference>
<dbReference type="Gene3D" id="3.30.70.3500">
    <property type="entry name" value="MukB, hinge domain"/>
    <property type="match status" value="1"/>
</dbReference>
<dbReference type="HAMAP" id="MF_01800">
    <property type="entry name" value="MukB"/>
    <property type="match status" value="1"/>
</dbReference>
<dbReference type="InterPro" id="IPR012090">
    <property type="entry name" value="MukB"/>
</dbReference>
<dbReference type="InterPro" id="IPR050308">
    <property type="entry name" value="MukB/SMC"/>
</dbReference>
<dbReference type="InterPro" id="IPR032520">
    <property type="entry name" value="MukB_hinge"/>
</dbReference>
<dbReference type="InterPro" id="IPR042501">
    <property type="entry name" value="MukB_hinge_sf"/>
</dbReference>
<dbReference type="InterPro" id="IPR007406">
    <property type="entry name" value="MukB_N_dom"/>
</dbReference>
<dbReference type="InterPro" id="IPR027417">
    <property type="entry name" value="P-loop_NTPase"/>
</dbReference>
<dbReference type="NCBIfam" id="NF003422">
    <property type="entry name" value="PRK04863.1"/>
    <property type="match status" value="1"/>
</dbReference>
<dbReference type="PANTHER" id="PTHR42963">
    <property type="entry name" value="CHROMOSOME PARTITION PROTEIN MUKB"/>
    <property type="match status" value="1"/>
</dbReference>
<dbReference type="PANTHER" id="PTHR42963:SF1">
    <property type="entry name" value="DUF4476 DOMAIN-CONTAINING PROTEIN"/>
    <property type="match status" value="1"/>
</dbReference>
<dbReference type="Pfam" id="PF04310">
    <property type="entry name" value="MukB"/>
    <property type="match status" value="1"/>
</dbReference>
<dbReference type="Pfam" id="PF16330">
    <property type="entry name" value="MukB_hinge"/>
    <property type="match status" value="1"/>
</dbReference>
<dbReference type="Pfam" id="PF13558">
    <property type="entry name" value="SbcC_Walker_B"/>
    <property type="match status" value="1"/>
</dbReference>
<dbReference type="PIRSF" id="PIRSF005246">
    <property type="entry name" value="MukB"/>
    <property type="match status" value="1"/>
</dbReference>
<dbReference type="SUPFAM" id="SSF52540">
    <property type="entry name" value="P-loop containing nucleoside triphosphate hydrolases"/>
    <property type="match status" value="2"/>
</dbReference>
<comment type="function">
    <text evidence="1">Plays a central role in chromosome condensation, segregation and cell cycle progression. Functions as a homodimer, which is essential for chromosome partition. Involved in negative DNA supercoiling in vivo, and by this means organize and compact chromosomes. May achieve or facilitate chromosome segregation by condensation DNA from both sides of a centrally located replisome during cell division.</text>
</comment>
<comment type="subunit">
    <text evidence="1">Homodimerization via its hinge domain. Binds to DNA via its C-terminal region. Interacts, and probably forms a ternary complex, with MukE and MukF via its C-terminal region. The complex formation is stimulated by calcium or magnesium. Interacts with tubulin-related protein FtsZ.</text>
</comment>
<comment type="subcellular location">
    <subcellularLocation>
        <location evidence="1">Cytoplasm</location>
        <location evidence="1">Nucleoid</location>
    </subcellularLocation>
    <text evidence="1">Restricted to the nucleoid region.</text>
</comment>
<comment type="domain">
    <text evidence="1">The hinge domain, which separates the large intramolecular coiled coil regions, allows the homodimerization, forming a V-shaped homodimer.</text>
</comment>
<comment type="similarity">
    <text evidence="1">Belongs to the SMC family. MukB subfamily.</text>
</comment>
<name>MUKB_ECOL5</name>
<evidence type="ECO:0000255" key="1">
    <source>
        <dbReference type="HAMAP-Rule" id="MF_01800"/>
    </source>
</evidence>
<accession>Q0TJC9</accession>
<sequence length="1486" mass="170212">MIERGKFRSLTLINWNGFFARTFDLDELVTTLSGGNGAGKSTTMAAFVTALIPDLTLLHFRNTTEAGATSGSRDKGLHGKLKAGVCYSMLDTINSRHQRVVVGVRLQQVAGRDRKVDIKPFAIQGLPMSVQPTQLVTETLNERQARVLPLNELKDKLEAMEGVQFKQFNSITDYHSLMFDLGIIARRLRSASDRSKFYRLIEASLYGGISSAITRSLRDYLLPENSGVRKAFQDMEAALRENRMTLEAIRVTQSDRDLFKHLISEATNYVAADYMRHANERRVHLDKALEFRRELHTSRKQLAAEQYKHVDMARELAEHNGAEGDLEADYQAASDHLNLVQTALRQQEKIERYEADLDELQIRLEEQNEVVAEAIERQEENEARAEAAELEVDELKSQLADYQQALDVQQTRAIQYNQAIAALNRAKELCHLPDLTADSAAEWLETFQAKELEATEKMLSLEQKMSMAQTAHSQFEQAYQLVVAINGPLARNEAWDVARELLREGVDQRHLAEQVQPLRMRLSELEQRLREQQEAERLLADFCKRQGKNFDIDELEALHQELEARIASLSDSVSNAREERMALRQEQEQLQSRIQSLMQRAPVWLAAQNSLNQLSEQCGEEFTSSQDVTEFLQQLLEREREAIVERDEVGARKNAVDEEIERLSQPGGSEDQRLNALAERFGGVLLSEIYDDVSLEDAPYFSALYGPSRHAIVVPDLSQVTEHLEGLTDCPEDLYLIEGDPQSFDDSVFSVDELEKAVVVKIADRQWRYSRFPEVPLFGRAARESRIESLHAEREVLSERFATLSFDVQKTQRLHQAFSRFIGSHLAVAFESDPEAEIRQLNSRRVELERALSNHENDNQQQRIQFEQAKEGVTALNRILPRLNLLADDSLADRVDEIRERLDEAQEAARFVQQFGNQLAKLEPIVSVLQSDPEQFEQLKEDYAYSQQMQRDARQQAFALTEVVQRRAHFSYSDSAEMLSGNSDLNEKLRERLEQAEAERTRAREALRGHAAQLNQYNQVLASLKSSYDTKKELLNDLQRELQDIGVRADSGAEERARIRRDELHAQLSNNRSRRNQLEKALTFCEAEMDNLTRKLRKLERDYFEMREQVVTAKAGWCAVMRMVKDNGVERRLHRRELAYLSADDLRSMSDKALGALRLAVADNEHLRDVLRMSEDPKRPERKIQFFVAVYQHLRERIRQDIIRTDDPVEAIEQMEIELSRLTEELTSREQKLAISSRSVANIIRKTIQREQNRIRMLNQGLQNVSFGQVNSVRLNVNVRETHAMLLDVLSEQHEQHQDLFNSNRLTFSEALAKLYQRLNPQIDMGQRTPQTIGEELLDYRNYLEMEVEVNRGSDGWLRAESGALSTGEAIGTGMSILVMVVQSWEDESRRLRGKDISPCRLLFLDEAARLDARSIATLFELCERLQMQLIIAAPENISPEKGTTYKLVRKVFQNTEHVHVVGLRGFAPQLPETLPGSDEAPSQAS</sequence>
<protein>
    <recommendedName>
        <fullName evidence="1">Chromosome partition protein MukB</fullName>
    </recommendedName>
    <alternativeName>
        <fullName evidence="1">Structural maintenance of chromosome-related protein</fullName>
    </alternativeName>
</protein>
<gene>
    <name evidence="1" type="primary">mukB</name>
    <name type="ordered locus">ECP_0935</name>
</gene>
<proteinExistence type="inferred from homology"/>
<keyword id="KW-0067">ATP-binding</keyword>
<keyword id="KW-0131">Cell cycle</keyword>
<keyword id="KW-0132">Cell division</keyword>
<keyword id="KW-0159">Chromosome partition</keyword>
<keyword id="KW-0175">Coiled coil</keyword>
<keyword id="KW-0963">Cytoplasm</keyword>
<keyword id="KW-0226">DNA condensation</keyword>
<keyword id="KW-0238">DNA-binding</keyword>
<keyword id="KW-0547">Nucleotide-binding</keyword>
<feature type="chain" id="PRO_1000069904" description="Chromosome partition protein MukB">
    <location>
        <begin position="1"/>
        <end position="1486"/>
    </location>
</feature>
<feature type="region of interest" description="Flexible hinge" evidence="1">
    <location>
        <begin position="666"/>
        <end position="783"/>
    </location>
</feature>
<feature type="coiled-coil region" evidence="1">
    <location>
        <begin position="326"/>
        <end position="418"/>
    </location>
</feature>
<feature type="coiled-coil region" evidence="1">
    <location>
        <begin position="444"/>
        <end position="480"/>
    </location>
</feature>
<feature type="coiled-coil region" evidence="1">
    <location>
        <begin position="509"/>
        <end position="603"/>
    </location>
</feature>
<feature type="coiled-coil region" evidence="1">
    <location>
        <begin position="835"/>
        <end position="923"/>
    </location>
</feature>
<feature type="coiled-coil region" evidence="1">
    <location>
        <begin position="977"/>
        <end position="1115"/>
    </location>
</feature>
<feature type="coiled-coil region" evidence="1">
    <location>
        <begin position="1209"/>
        <end position="1266"/>
    </location>
</feature>
<feature type="binding site" evidence="1">
    <location>
        <begin position="34"/>
        <end position="41"/>
    </location>
    <ligand>
        <name>ATP</name>
        <dbReference type="ChEBI" id="CHEBI:30616"/>
    </ligand>
</feature>
<organism>
    <name type="scientific">Escherichia coli O6:K15:H31 (strain 536 / UPEC)</name>
    <dbReference type="NCBI Taxonomy" id="362663"/>
    <lineage>
        <taxon>Bacteria</taxon>
        <taxon>Pseudomonadati</taxon>
        <taxon>Pseudomonadota</taxon>
        <taxon>Gammaproteobacteria</taxon>
        <taxon>Enterobacterales</taxon>
        <taxon>Enterobacteriaceae</taxon>
        <taxon>Escherichia</taxon>
    </lineage>
</organism>